<protein>
    <recommendedName>
        <fullName>Protein dml1</fullName>
    </recommendedName>
</protein>
<sequence>MHEIITLQLGQRANYLATHFWNLQESYFTYGEAEETIIDHDVHFRPGIGADGSETYTPRTLIYDLKGAFGSLRKYNALYELSTDADPGQGLWDGKEVIQRQTPIIPSEYQKYLEQGLPAPALSSDTVRYWSDYNRLFYHPRSIVQLNDYELNSKIMPFEDWSVGDDLFGELDKEHDLLDRDLRPFAEECDQLRALQLFTSSDDAWGGFAAKYVDRLRDEFGKKAVWVWAIEGGKKVQKHNQLKRDMNKARSIHSISPQSSLYVPILDPPTRLPISISLDAQSEWQTSALISTAMETVTLPTRLRSYTDFETSLAGEDGTHKIFELQSEILPEDMSNHTQPVQNPEDRRTQASKGGSSKVKREFDLDFSYDDPNNGDSHIFNQVQVGRGYSPEKEVPKSREDLGLKRKERFYNSEPMLESFYIPLAFPILDSSPRNMFSVKHKEAKINVLAALTASSRTATKLKAMEAMAGRVIGVDERENLVNGLGEIRESYETGWMSDSDFDDD</sequence>
<reference key="1">
    <citation type="journal article" date="2005" name="Nature">
        <title>Genomic sequence of the pathogenic and allergenic filamentous fungus Aspergillus fumigatus.</title>
        <authorList>
            <person name="Nierman W.C."/>
            <person name="Pain A."/>
            <person name="Anderson M.J."/>
            <person name="Wortman J.R."/>
            <person name="Kim H.S."/>
            <person name="Arroyo J."/>
            <person name="Berriman M."/>
            <person name="Abe K."/>
            <person name="Archer D.B."/>
            <person name="Bermejo C."/>
            <person name="Bennett J.W."/>
            <person name="Bowyer P."/>
            <person name="Chen D."/>
            <person name="Collins M."/>
            <person name="Coulsen R."/>
            <person name="Davies R."/>
            <person name="Dyer P.S."/>
            <person name="Farman M.L."/>
            <person name="Fedorova N."/>
            <person name="Fedorova N.D."/>
            <person name="Feldblyum T.V."/>
            <person name="Fischer R."/>
            <person name="Fosker N."/>
            <person name="Fraser A."/>
            <person name="Garcia J.L."/>
            <person name="Garcia M.J."/>
            <person name="Goble A."/>
            <person name="Goldman G.H."/>
            <person name="Gomi K."/>
            <person name="Griffith-Jones S."/>
            <person name="Gwilliam R."/>
            <person name="Haas B.J."/>
            <person name="Haas H."/>
            <person name="Harris D.E."/>
            <person name="Horiuchi H."/>
            <person name="Huang J."/>
            <person name="Humphray S."/>
            <person name="Jimenez J."/>
            <person name="Keller N."/>
            <person name="Khouri H."/>
            <person name="Kitamoto K."/>
            <person name="Kobayashi T."/>
            <person name="Konzack S."/>
            <person name="Kulkarni R."/>
            <person name="Kumagai T."/>
            <person name="Lafton A."/>
            <person name="Latge J.-P."/>
            <person name="Li W."/>
            <person name="Lord A."/>
            <person name="Lu C."/>
            <person name="Majoros W.H."/>
            <person name="May G.S."/>
            <person name="Miller B.L."/>
            <person name="Mohamoud Y."/>
            <person name="Molina M."/>
            <person name="Monod M."/>
            <person name="Mouyna I."/>
            <person name="Mulligan S."/>
            <person name="Murphy L.D."/>
            <person name="O'Neil S."/>
            <person name="Paulsen I."/>
            <person name="Penalva M.A."/>
            <person name="Pertea M."/>
            <person name="Price C."/>
            <person name="Pritchard B.L."/>
            <person name="Quail M.A."/>
            <person name="Rabbinowitsch E."/>
            <person name="Rawlins N."/>
            <person name="Rajandream M.A."/>
            <person name="Reichard U."/>
            <person name="Renauld H."/>
            <person name="Robson G.D."/>
            <person name="Rodriguez de Cordoba S."/>
            <person name="Rodriguez-Pena J.M."/>
            <person name="Ronning C.M."/>
            <person name="Rutter S."/>
            <person name="Salzberg S.L."/>
            <person name="Sanchez M."/>
            <person name="Sanchez-Ferrero J.C."/>
            <person name="Saunders D."/>
            <person name="Seeger K."/>
            <person name="Squares R."/>
            <person name="Squares S."/>
            <person name="Takeuchi M."/>
            <person name="Tekaia F."/>
            <person name="Turner G."/>
            <person name="Vazquez de Aldana C.R."/>
            <person name="Weidman J."/>
            <person name="White O."/>
            <person name="Woodward J.R."/>
            <person name="Yu J.-H."/>
            <person name="Fraser C.M."/>
            <person name="Galagan J.E."/>
            <person name="Asai K."/>
            <person name="Machida M."/>
            <person name="Hall N."/>
            <person name="Barrell B.G."/>
            <person name="Denning D.W."/>
        </authorList>
    </citation>
    <scope>NUCLEOTIDE SEQUENCE [LARGE SCALE GENOMIC DNA]</scope>
    <source>
        <strain>ATCC MYA-4609 / CBS 101355 / FGSC A1100 / Af293</strain>
    </source>
</reference>
<comment type="function">
    <text evidence="1">Involved in the partitioning of the mitochondrial organelle and mitochondrial DNA (mtDNA) inheritance.</text>
</comment>
<comment type="subcellular location">
    <subcellularLocation>
        <location evidence="1">Mitochondrion</location>
    </subcellularLocation>
</comment>
<comment type="similarity">
    <text evidence="3">Belongs to the misato family.</text>
</comment>
<accession>Q4WRU4</accession>
<evidence type="ECO:0000250" key="1"/>
<evidence type="ECO:0000256" key="2">
    <source>
        <dbReference type="SAM" id="MobiDB-lite"/>
    </source>
</evidence>
<evidence type="ECO:0000305" key="3"/>
<feature type="chain" id="PRO_0000285328" description="Protein dml1">
    <location>
        <begin position="1"/>
        <end position="505"/>
    </location>
</feature>
<feature type="region of interest" description="Disordered" evidence="2">
    <location>
        <begin position="330"/>
        <end position="358"/>
    </location>
</feature>
<organism>
    <name type="scientific">Aspergillus fumigatus (strain ATCC MYA-4609 / CBS 101355 / FGSC A1100 / Af293)</name>
    <name type="common">Neosartorya fumigata</name>
    <dbReference type="NCBI Taxonomy" id="330879"/>
    <lineage>
        <taxon>Eukaryota</taxon>
        <taxon>Fungi</taxon>
        <taxon>Dikarya</taxon>
        <taxon>Ascomycota</taxon>
        <taxon>Pezizomycotina</taxon>
        <taxon>Eurotiomycetes</taxon>
        <taxon>Eurotiomycetidae</taxon>
        <taxon>Eurotiales</taxon>
        <taxon>Aspergillaceae</taxon>
        <taxon>Aspergillus</taxon>
        <taxon>Aspergillus subgen. Fumigati</taxon>
    </lineage>
</organism>
<gene>
    <name type="primary">dml1</name>
    <name type="ORF">AFUA_1G15070</name>
</gene>
<proteinExistence type="inferred from homology"/>
<name>DML1_ASPFU</name>
<keyword id="KW-0496">Mitochondrion</keyword>
<keyword id="KW-1185">Reference proteome</keyword>
<dbReference type="EMBL" id="AAHF01000004">
    <property type="protein sequence ID" value="EAL90838.1"/>
    <property type="molecule type" value="Genomic_DNA"/>
</dbReference>
<dbReference type="RefSeq" id="XP_752876.1">
    <property type="nucleotide sequence ID" value="XM_747783.1"/>
</dbReference>
<dbReference type="FunCoup" id="Q4WRU4">
    <property type="interactions" value="67"/>
</dbReference>
<dbReference type="STRING" id="330879.Q4WRU4"/>
<dbReference type="EnsemblFungi" id="EAL90838">
    <property type="protein sequence ID" value="EAL90838"/>
    <property type="gene ID" value="AFUA_1G15070"/>
</dbReference>
<dbReference type="GeneID" id="3509899"/>
<dbReference type="KEGG" id="afm:AFUA_1G15070"/>
<dbReference type="VEuPathDB" id="FungiDB:Afu1g15070"/>
<dbReference type="eggNOG" id="KOG2530">
    <property type="taxonomic scope" value="Eukaryota"/>
</dbReference>
<dbReference type="HOGENOM" id="CLU_022511_2_0_1"/>
<dbReference type="InParanoid" id="Q4WRU4"/>
<dbReference type="OMA" id="SYETGWM"/>
<dbReference type="OrthoDB" id="271881at2759"/>
<dbReference type="Proteomes" id="UP000002530">
    <property type="component" value="Chromosome 1"/>
</dbReference>
<dbReference type="GO" id="GO:0005737">
    <property type="term" value="C:cytoplasm"/>
    <property type="evidence" value="ECO:0000318"/>
    <property type="project" value="GO_Central"/>
</dbReference>
<dbReference type="GO" id="GO:0005739">
    <property type="term" value="C:mitochondrion"/>
    <property type="evidence" value="ECO:0000318"/>
    <property type="project" value="GO_Central"/>
</dbReference>
<dbReference type="GO" id="GO:0007005">
    <property type="term" value="P:mitochondrion organization"/>
    <property type="evidence" value="ECO:0000318"/>
    <property type="project" value="GO_Central"/>
</dbReference>
<dbReference type="CDD" id="cd06060">
    <property type="entry name" value="misato"/>
    <property type="match status" value="1"/>
</dbReference>
<dbReference type="Gene3D" id="3.40.50.1440">
    <property type="entry name" value="Tubulin/FtsZ, GTPase domain"/>
    <property type="match status" value="1"/>
</dbReference>
<dbReference type="InterPro" id="IPR049942">
    <property type="entry name" value="DML1/Misato"/>
</dbReference>
<dbReference type="InterPro" id="IPR029209">
    <property type="entry name" value="DML1/Misato_tubulin"/>
</dbReference>
<dbReference type="InterPro" id="IPR019605">
    <property type="entry name" value="Misato_II_tubulin-like"/>
</dbReference>
<dbReference type="InterPro" id="IPR036525">
    <property type="entry name" value="Tubulin/FtsZ_GTPase_sf"/>
</dbReference>
<dbReference type="PANTHER" id="PTHR13391">
    <property type="entry name" value="MITOCHONDRIAL DISTRIBUTION REGULATOR MISATO"/>
    <property type="match status" value="1"/>
</dbReference>
<dbReference type="PANTHER" id="PTHR13391:SF0">
    <property type="entry name" value="PROTEIN MISATO HOMOLOG 1"/>
    <property type="match status" value="1"/>
</dbReference>
<dbReference type="Pfam" id="PF10644">
    <property type="entry name" value="Misat_Tub_SegII"/>
    <property type="match status" value="1"/>
</dbReference>
<dbReference type="Pfam" id="PF14881">
    <property type="entry name" value="Tubulin_3"/>
    <property type="match status" value="1"/>
</dbReference>
<dbReference type="SUPFAM" id="SSF52490">
    <property type="entry name" value="Tubulin nucleotide-binding domain-like"/>
    <property type="match status" value="1"/>
</dbReference>